<gene>
    <name type="primary">mazE4</name>
    <name type="ordered locus">MT1541</name>
</gene>
<name>MAZE4_MYCTO</name>
<keyword id="KW-1185">Reference proteome</keyword>
<keyword id="KW-1277">Toxin-antitoxin system</keyword>
<accession>P9WJ90</accession>
<accession>L0T8F3</accession>
<accession>P0A5E9</accession>
<accession>P71775</accession>
<organism>
    <name type="scientific">Mycobacterium tuberculosis (strain CDC 1551 / Oshkosh)</name>
    <dbReference type="NCBI Taxonomy" id="83331"/>
    <lineage>
        <taxon>Bacteria</taxon>
        <taxon>Bacillati</taxon>
        <taxon>Actinomycetota</taxon>
        <taxon>Actinomycetes</taxon>
        <taxon>Mycobacteriales</taxon>
        <taxon>Mycobacteriaceae</taxon>
        <taxon>Mycobacterium</taxon>
        <taxon>Mycobacterium tuberculosis complex</taxon>
    </lineage>
</organism>
<protein>
    <recommendedName>
        <fullName>Probable antitoxin MazE4</fullName>
    </recommendedName>
</protein>
<comment type="function">
    <text evidence="1">Antitoxin component of a type II toxin-antitoxin (TA) system. Labile antitoxin that binds to cognate MazF4 toxin and counteracts its endoribonuclease activity.</text>
</comment>
<comment type="subunit">
    <text evidence="1">Forms a complex with cognate toxin MazF4.</text>
</comment>
<feature type="chain" id="PRO_0000427871" description="Probable antitoxin MazE4">
    <location>
        <begin position="1"/>
        <end position="100"/>
    </location>
</feature>
<feature type="region of interest" description="Disordered" evidence="2">
    <location>
        <begin position="77"/>
        <end position="100"/>
    </location>
</feature>
<evidence type="ECO:0000250" key="1">
    <source>
        <dbReference type="UniProtKB" id="P9WJ91"/>
    </source>
</evidence>
<evidence type="ECO:0000256" key="2">
    <source>
        <dbReference type="SAM" id="MobiDB-lite"/>
    </source>
</evidence>
<reference key="1">
    <citation type="journal article" date="2002" name="J. Bacteriol.">
        <title>Whole-genome comparison of Mycobacterium tuberculosis clinical and laboratory strains.</title>
        <authorList>
            <person name="Fleischmann R.D."/>
            <person name="Alland D."/>
            <person name="Eisen J.A."/>
            <person name="Carpenter L."/>
            <person name="White O."/>
            <person name="Peterson J.D."/>
            <person name="DeBoy R.T."/>
            <person name="Dodson R.J."/>
            <person name="Gwinn M.L."/>
            <person name="Haft D.H."/>
            <person name="Hickey E.K."/>
            <person name="Kolonay J.F."/>
            <person name="Nelson W.C."/>
            <person name="Umayam L.A."/>
            <person name="Ermolaeva M.D."/>
            <person name="Salzberg S.L."/>
            <person name="Delcher A."/>
            <person name="Utterback T.R."/>
            <person name="Weidman J.F."/>
            <person name="Khouri H.M."/>
            <person name="Gill J."/>
            <person name="Mikula A."/>
            <person name="Bishai W."/>
            <person name="Jacobs W.R. Jr."/>
            <person name="Venter J.C."/>
            <person name="Fraser C.M."/>
        </authorList>
    </citation>
    <scope>NUCLEOTIDE SEQUENCE [LARGE SCALE GENOMIC DNA]</scope>
    <source>
        <strain>CDC 1551 / Oshkosh</strain>
    </source>
</reference>
<dbReference type="EMBL" id="AE000516">
    <property type="protein sequence ID" value="AAK45808.1"/>
    <property type="molecule type" value="Genomic_DNA"/>
</dbReference>
<dbReference type="PIR" id="A70712">
    <property type="entry name" value="A70712"/>
</dbReference>
<dbReference type="RefSeq" id="WP_003917487.1">
    <property type="nucleotide sequence ID" value="NC_002755.2"/>
</dbReference>
<dbReference type="SMR" id="P9WJ90"/>
<dbReference type="KEGG" id="mtc:MT1541"/>
<dbReference type="PATRIC" id="fig|83331.31.peg.1658"/>
<dbReference type="HOGENOM" id="CLU_2480056_0_0_11"/>
<dbReference type="Proteomes" id="UP000001020">
    <property type="component" value="Chromosome"/>
</dbReference>
<sequence>MPFLVALSGIISGVHDHSMTVRLDQQTRQRLQDIVKGGYRSANAAIVDAINKRWEALHDEQLDAAYAAAIHDNPAYPYESEAERSAARARRNARQQRSAQ</sequence>
<proteinExistence type="inferred from homology"/>